<feature type="chain" id="PRO_0000240767" description="Argininosuccinate lyase">
    <location>
        <begin position="1"/>
        <end position="458"/>
    </location>
</feature>
<organism>
    <name type="scientific">Salmonella paratyphi A (strain ATCC 9150 / SARB42)</name>
    <dbReference type="NCBI Taxonomy" id="295319"/>
    <lineage>
        <taxon>Bacteria</taxon>
        <taxon>Pseudomonadati</taxon>
        <taxon>Pseudomonadota</taxon>
        <taxon>Gammaproteobacteria</taxon>
        <taxon>Enterobacterales</taxon>
        <taxon>Enterobacteriaceae</taxon>
        <taxon>Salmonella</taxon>
    </lineage>
</organism>
<dbReference type="EC" id="4.3.2.1" evidence="1"/>
<dbReference type="EMBL" id="CP000026">
    <property type="protein sequence ID" value="AAV79724.1"/>
    <property type="molecule type" value="Genomic_DNA"/>
</dbReference>
<dbReference type="RefSeq" id="WP_001230040.1">
    <property type="nucleotide sequence ID" value="NC_006511.1"/>
</dbReference>
<dbReference type="SMR" id="Q5PK73"/>
<dbReference type="KEGG" id="spt:SPA3961"/>
<dbReference type="HOGENOM" id="CLU_027272_2_3_6"/>
<dbReference type="UniPathway" id="UPA00068">
    <property type="reaction ID" value="UER00114"/>
</dbReference>
<dbReference type="Proteomes" id="UP000008185">
    <property type="component" value="Chromosome"/>
</dbReference>
<dbReference type="GO" id="GO:0005829">
    <property type="term" value="C:cytosol"/>
    <property type="evidence" value="ECO:0007669"/>
    <property type="project" value="TreeGrafter"/>
</dbReference>
<dbReference type="GO" id="GO:0004056">
    <property type="term" value="F:argininosuccinate lyase activity"/>
    <property type="evidence" value="ECO:0007669"/>
    <property type="project" value="UniProtKB-UniRule"/>
</dbReference>
<dbReference type="GO" id="GO:0042450">
    <property type="term" value="P:arginine biosynthetic process via ornithine"/>
    <property type="evidence" value="ECO:0007669"/>
    <property type="project" value="InterPro"/>
</dbReference>
<dbReference type="GO" id="GO:0006526">
    <property type="term" value="P:L-arginine biosynthetic process"/>
    <property type="evidence" value="ECO:0007669"/>
    <property type="project" value="UniProtKB-UniRule"/>
</dbReference>
<dbReference type="CDD" id="cd01359">
    <property type="entry name" value="Argininosuccinate_lyase"/>
    <property type="match status" value="1"/>
</dbReference>
<dbReference type="FunFam" id="1.10.275.10:FF:000004">
    <property type="entry name" value="Argininosuccinate lyase"/>
    <property type="match status" value="1"/>
</dbReference>
<dbReference type="FunFam" id="1.10.40.30:FF:000001">
    <property type="entry name" value="Argininosuccinate lyase"/>
    <property type="match status" value="1"/>
</dbReference>
<dbReference type="FunFam" id="1.20.200.10:FF:000006">
    <property type="entry name" value="Argininosuccinate lyase"/>
    <property type="match status" value="1"/>
</dbReference>
<dbReference type="Gene3D" id="1.10.40.30">
    <property type="entry name" value="Fumarase/aspartase (C-terminal domain)"/>
    <property type="match status" value="1"/>
</dbReference>
<dbReference type="Gene3D" id="1.20.200.10">
    <property type="entry name" value="Fumarase/aspartase (Central domain)"/>
    <property type="match status" value="1"/>
</dbReference>
<dbReference type="Gene3D" id="1.10.275.10">
    <property type="entry name" value="Fumarase/aspartase (N-terminal domain)"/>
    <property type="match status" value="1"/>
</dbReference>
<dbReference type="HAMAP" id="MF_00006">
    <property type="entry name" value="Arg_succ_lyase"/>
    <property type="match status" value="1"/>
</dbReference>
<dbReference type="InterPro" id="IPR029419">
    <property type="entry name" value="Arg_succ_lyase_C"/>
</dbReference>
<dbReference type="InterPro" id="IPR009049">
    <property type="entry name" value="Argininosuccinate_lyase"/>
</dbReference>
<dbReference type="InterPro" id="IPR024083">
    <property type="entry name" value="Fumarase/histidase_N"/>
</dbReference>
<dbReference type="InterPro" id="IPR020557">
    <property type="entry name" value="Fumarate_lyase_CS"/>
</dbReference>
<dbReference type="InterPro" id="IPR000362">
    <property type="entry name" value="Fumarate_lyase_fam"/>
</dbReference>
<dbReference type="InterPro" id="IPR022761">
    <property type="entry name" value="Fumarate_lyase_N"/>
</dbReference>
<dbReference type="InterPro" id="IPR008948">
    <property type="entry name" value="L-Aspartase-like"/>
</dbReference>
<dbReference type="NCBIfam" id="TIGR00838">
    <property type="entry name" value="argH"/>
    <property type="match status" value="1"/>
</dbReference>
<dbReference type="NCBIfam" id="NF008964">
    <property type="entry name" value="PRK12308.1"/>
    <property type="match status" value="1"/>
</dbReference>
<dbReference type="PANTHER" id="PTHR43814">
    <property type="entry name" value="ARGININOSUCCINATE LYASE"/>
    <property type="match status" value="1"/>
</dbReference>
<dbReference type="PANTHER" id="PTHR43814:SF1">
    <property type="entry name" value="ARGININOSUCCINATE LYASE"/>
    <property type="match status" value="1"/>
</dbReference>
<dbReference type="Pfam" id="PF14698">
    <property type="entry name" value="ASL_C2"/>
    <property type="match status" value="1"/>
</dbReference>
<dbReference type="Pfam" id="PF00206">
    <property type="entry name" value="Lyase_1"/>
    <property type="match status" value="1"/>
</dbReference>
<dbReference type="PRINTS" id="PR00145">
    <property type="entry name" value="ARGSUCLYASE"/>
</dbReference>
<dbReference type="PRINTS" id="PR00149">
    <property type="entry name" value="FUMRATELYASE"/>
</dbReference>
<dbReference type="SUPFAM" id="SSF48557">
    <property type="entry name" value="L-aspartase-like"/>
    <property type="match status" value="1"/>
</dbReference>
<dbReference type="PROSITE" id="PS00163">
    <property type="entry name" value="FUMARATE_LYASES"/>
    <property type="match status" value="1"/>
</dbReference>
<protein>
    <recommendedName>
        <fullName evidence="1">Argininosuccinate lyase</fullName>
        <shortName evidence="1">ASAL</shortName>
        <ecNumber evidence="1">4.3.2.1</ecNumber>
    </recommendedName>
    <alternativeName>
        <fullName evidence="1">Arginosuccinase</fullName>
    </alternativeName>
</protein>
<gene>
    <name evidence="1" type="primary">argH</name>
    <name type="ordered locus">SPA3961</name>
</gene>
<reference key="1">
    <citation type="journal article" date="2004" name="Nat. Genet.">
        <title>Comparison of genome degradation in Paratyphi A and Typhi, human-restricted serovars of Salmonella enterica that cause typhoid.</title>
        <authorList>
            <person name="McClelland M."/>
            <person name="Sanderson K.E."/>
            <person name="Clifton S.W."/>
            <person name="Latreille P."/>
            <person name="Porwollik S."/>
            <person name="Sabo A."/>
            <person name="Meyer R."/>
            <person name="Bieri T."/>
            <person name="Ozersky P."/>
            <person name="McLellan M."/>
            <person name="Harkins C.R."/>
            <person name="Wang C."/>
            <person name="Nguyen C."/>
            <person name="Berghoff A."/>
            <person name="Elliott G."/>
            <person name="Kohlberg S."/>
            <person name="Strong C."/>
            <person name="Du F."/>
            <person name="Carter J."/>
            <person name="Kremizki C."/>
            <person name="Layman D."/>
            <person name="Leonard S."/>
            <person name="Sun H."/>
            <person name="Fulton L."/>
            <person name="Nash W."/>
            <person name="Miner T."/>
            <person name="Minx P."/>
            <person name="Delehaunty K."/>
            <person name="Fronick C."/>
            <person name="Magrini V."/>
            <person name="Nhan M."/>
            <person name="Warren W."/>
            <person name="Florea L."/>
            <person name="Spieth J."/>
            <person name="Wilson R.K."/>
        </authorList>
    </citation>
    <scope>NUCLEOTIDE SEQUENCE [LARGE SCALE GENOMIC DNA]</scope>
    <source>
        <strain>ATCC 9150 / SARB42</strain>
    </source>
</reference>
<proteinExistence type="inferred from homology"/>
<evidence type="ECO:0000255" key="1">
    <source>
        <dbReference type="HAMAP-Rule" id="MF_00006"/>
    </source>
</evidence>
<comment type="catalytic activity">
    <reaction evidence="1">
        <text>2-(N(omega)-L-arginino)succinate = fumarate + L-arginine</text>
        <dbReference type="Rhea" id="RHEA:24020"/>
        <dbReference type="ChEBI" id="CHEBI:29806"/>
        <dbReference type="ChEBI" id="CHEBI:32682"/>
        <dbReference type="ChEBI" id="CHEBI:57472"/>
        <dbReference type="EC" id="4.3.2.1"/>
    </reaction>
</comment>
<comment type="pathway">
    <text evidence="1">Amino-acid biosynthesis; L-arginine biosynthesis; L-arginine from L-ornithine and carbamoyl phosphate: step 3/3.</text>
</comment>
<comment type="subcellular location">
    <subcellularLocation>
        <location evidence="1">Cytoplasm</location>
    </subcellularLocation>
</comment>
<comment type="similarity">
    <text evidence="1">Belongs to the lyase 1 family. Argininosuccinate lyase subfamily.</text>
</comment>
<keyword id="KW-0028">Amino-acid biosynthesis</keyword>
<keyword id="KW-0055">Arginine biosynthesis</keyword>
<keyword id="KW-0963">Cytoplasm</keyword>
<keyword id="KW-0456">Lyase</keyword>
<accession>Q5PK73</accession>
<name>ARLY_SALPA</name>
<sequence length="458" mass="50523">MALWGGRFTQAADQRFKQFNDSLRFDYRLAEQDIVGSVAWSKALVTVGVLTADEQRQLEEALNVLLEEVRANPQQILQSDAEDIHSWVEGKLIDKVGQLGKKLHTGRSRNDQVATDLKLWCKETVRELLTANRLLQSALVETAQVNQDAVMPGYTHLQRAQPVTFAHWCLAYVEMLARDESRLQDTLKRLDVSPLGCGALAGTAYEIDREQLAGWLGFASATRNSLDSVSDRDHVLELLSDAAIGMVHLSRFAEDLIFFNSGEAGFVELSDRVTSGSSLMPQKKNPDALELIRGKCGRVQGALTGMMMTLKGLPLAYNKDMQEDKEGLFDALDTWLDCLHMAALVLDGIQVKRPRCQEAAQQGYANATELADYLVAKGVPFREAHHIVGEAVVEAIRQGKPLEALPLADLQKFSRVIGDDVYPILSLQSCLDKRAAKGGVSPQQVAQAIDDARARLAL</sequence>